<name>COBS_SINMW</name>
<keyword id="KW-0997">Cell inner membrane</keyword>
<keyword id="KW-1003">Cell membrane</keyword>
<keyword id="KW-0169">Cobalamin biosynthesis</keyword>
<keyword id="KW-0460">Magnesium</keyword>
<keyword id="KW-0472">Membrane</keyword>
<keyword id="KW-0808">Transferase</keyword>
<keyword id="KW-0812">Transmembrane</keyword>
<keyword id="KW-1133">Transmembrane helix</keyword>
<reference key="1">
    <citation type="submission" date="2007-06" db="EMBL/GenBank/DDBJ databases">
        <title>Complete sequence of Sinorhizobium medicae WSM419 chromosome.</title>
        <authorList>
            <consortium name="US DOE Joint Genome Institute"/>
            <person name="Copeland A."/>
            <person name="Lucas S."/>
            <person name="Lapidus A."/>
            <person name="Barry K."/>
            <person name="Glavina del Rio T."/>
            <person name="Dalin E."/>
            <person name="Tice H."/>
            <person name="Pitluck S."/>
            <person name="Chain P."/>
            <person name="Malfatti S."/>
            <person name="Shin M."/>
            <person name="Vergez L."/>
            <person name="Schmutz J."/>
            <person name="Larimer F."/>
            <person name="Land M."/>
            <person name="Hauser L."/>
            <person name="Kyrpides N."/>
            <person name="Mikhailova N."/>
            <person name="Reeve W.G."/>
            <person name="Richardson P."/>
        </authorList>
    </citation>
    <scope>NUCLEOTIDE SEQUENCE [LARGE SCALE GENOMIC DNA]</scope>
    <source>
        <strain>WSM419</strain>
    </source>
</reference>
<gene>
    <name evidence="1" type="primary">cobS</name>
    <name type="ordered locus">Smed_1604</name>
</gene>
<accession>A6U9W5</accession>
<dbReference type="EC" id="2.7.8.26" evidence="1"/>
<dbReference type="EMBL" id="CP000738">
    <property type="protein sequence ID" value="ABR60445.1"/>
    <property type="molecule type" value="Genomic_DNA"/>
</dbReference>
<dbReference type="RefSeq" id="WP_011975752.1">
    <property type="nucleotide sequence ID" value="NC_009636.1"/>
</dbReference>
<dbReference type="RefSeq" id="YP_001327280.1">
    <property type="nucleotide sequence ID" value="NC_009636.1"/>
</dbReference>
<dbReference type="STRING" id="366394.Smed_1604"/>
<dbReference type="KEGG" id="smd:Smed_1604"/>
<dbReference type="PATRIC" id="fig|366394.8.peg.4743"/>
<dbReference type="eggNOG" id="COG0368">
    <property type="taxonomic scope" value="Bacteria"/>
</dbReference>
<dbReference type="HOGENOM" id="CLU_057426_1_2_5"/>
<dbReference type="OrthoDB" id="9794626at2"/>
<dbReference type="UniPathway" id="UPA00148">
    <property type="reaction ID" value="UER00238"/>
</dbReference>
<dbReference type="Proteomes" id="UP000001108">
    <property type="component" value="Chromosome"/>
</dbReference>
<dbReference type="GO" id="GO:0005886">
    <property type="term" value="C:plasma membrane"/>
    <property type="evidence" value="ECO:0007669"/>
    <property type="project" value="UniProtKB-SubCell"/>
</dbReference>
<dbReference type="GO" id="GO:0051073">
    <property type="term" value="F:adenosylcobinamide-GDP ribazoletransferase activity"/>
    <property type="evidence" value="ECO:0007669"/>
    <property type="project" value="UniProtKB-UniRule"/>
</dbReference>
<dbReference type="GO" id="GO:0008818">
    <property type="term" value="F:cobalamin 5'-phosphate synthase activity"/>
    <property type="evidence" value="ECO:0007669"/>
    <property type="project" value="UniProtKB-UniRule"/>
</dbReference>
<dbReference type="GO" id="GO:0009236">
    <property type="term" value="P:cobalamin biosynthetic process"/>
    <property type="evidence" value="ECO:0007669"/>
    <property type="project" value="UniProtKB-UniRule"/>
</dbReference>
<dbReference type="HAMAP" id="MF_00719">
    <property type="entry name" value="CobS"/>
    <property type="match status" value="1"/>
</dbReference>
<dbReference type="InterPro" id="IPR003805">
    <property type="entry name" value="CobS"/>
</dbReference>
<dbReference type="NCBIfam" id="TIGR00317">
    <property type="entry name" value="cobS"/>
    <property type="match status" value="1"/>
</dbReference>
<dbReference type="NCBIfam" id="NF001276">
    <property type="entry name" value="PRK00235.1-2"/>
    <property type="match status" value="1"/>
</dbReference>
<dbReference type="PANTHER" id="PTHR34148">
    <property type="entry name" value="ADENOSYLCOBINAMIDE-GDP RIBAZOLETRANSFERASE"/>
    <property type="match status" value="1"/>
</dbReference>
<dbReference type="PANTHER" id="PTHR34148:SF1">
    <property type="entry name" value="ADENOSYLCOBINAMIDE-GDP RIBAZOLETRANSFERASE"/>
    <property type="match status" value="1"/>
</dbReference>
<dbReference type="Pfam" id="PF02654">
    <property type="entry name" value="CobS"/>
    <property type="match status" value="1"/>
</dbReference>
<evidence type="ECO:0000255" key="1">
    <source>
        <dbReference type="HAMAP-Rule" id="MF_00719"/>
    </source>
</evidence>
<sequence>MTEIREFWDDVARSVAFLSRIPVPDRHFRGHDGGLGRAVRAFPLAGILIALPAAVTAVLLGAIHASSLFTAFLIVAAQATVTGALHEDGLADTADGFGGGRDRESALEIMKDSRIGTYGAVALILSFGIRVSALAAFLPLLTPTGGGVALLATAALSRAAMVWHWSRLPPARRDGVAAAAGAPEAPATSVALGSGVILALVLFFLSGIPTVAVLLSFGAFVLAVLSFTRIASRKLGGHTGDTIGATQQLTEVAVLGALALAI</sequence>
<organism>
    <name type="scientific">Sinorhizobium medicae (strain WSM419)</name>
    <name type="common">Ensifer medicae</name>
    <dbReference type="NCBI Taxonomy" id="366394"/>
    <lineage>
        <taxon>Bacteria</taxon>
        <taxon>Pseudomonadati</taxon>
        <taxon>Pseudomonadota</taxon>
        <taxon>Alphaproteobacteria</taxon>
        <taxon>Hyphomicrobiales</taxon>
        <taxon>Rhizobiaceae</taxon>
        <taxon>Sinorhizobium/Ensifer group</taxon>
        <taxon>Sinorhizobium</taxon>
    </lineage>
</organism>
<protein>
    <recommendedName>
        <fullName evidence="1">Adenosylcobinamide-GDP ribazoletransferase</fullName>
        <ecNumber evidence="1">2.7.8.26</ecNumber>
    </recommendedName>
    <alternativeName>
        <fullName evidence="1">Cobalamin synthase</fullName>
    </alternativeName>
    <alternativeName>
        <fullName evidence="1">Cobalamin-5'-phosphate synthase</fullName>
    </alternativeName>
</protein>
<comment type="function">
    <text evidence="1">Joins adenosylcobinamide-GDP and alpha-ribazole to generate adenosylcobalamin (Ado-cobalamin). Also synthesizes adenosylcobalamin 5'-phosphate from adenosylcobinamide-GDP and alpha-ribazole 5'-phosphate.</text>
</comment>
<comment type="catalytic activity">
    <reaction evidence="1">
        <text>alpha-ribazole + adenosylcob(III)inamide-GDP = adenosylcob(III)alamin + GMP + H(+)</text>
        <dbReference type="Rhea" id="RHEA:16049"/>
        <dbReference type="ChEBI" id="CHEBI:10329"/>
        <dbReference type="ChEBI" id="CHEBI:15378"/>
        <dbReference type="ChEBI" id="CHEBI:18408"/>
        <dbReference type="ChEBI" id="CHEBI:58115"/>
        <dbReference type="ChEBI" id="CHEBI:60487"/>
        <dbReference type="EC" id="2.7.8.26"/>
    </reaction>
</comment>
<comment type="catalytic activity">
    <reaction evidence="1">
        <text>alpha-ribazole 5'-phosphate + adenosylcob(III)inamide-GDP = adenosylcob(III)alamin 5'-phosphate + GMP + H(+)</text>
        <dbReference type="Rhea" id="RHEA:23560"/>
        <dbReference type="ChEBI" id="CHEBI:15378"/>
        <dbReference type="ChEBI" id="CHEBI:57918"/>
        <dbReference type="ChEBI" id="CHEBI:58115"/>
        <dbReference type="ChEBI" id="CHEBI:60487"/>
        <dbReference type="ChEBI" id="CHEBI:60493"/>
        <dbReference type="EC" id="2.7.8.26"/>
    </reaction>
</comment>
<comment type="cofactor">
    <cofactor evidence="1">
        <name>Mg(2+)</name>
        <dbReference type="ChEBI" id="CHEBI:18420"/>
    </cofactor>
</comment>
<comment type="pathway">
    <text evidence="1">Cofactor biosynthesis; adenosylcobalamin biosynthesis; adenosylcobalamin from cob(II)yrinate a,c-diamide: step 7/7.</text>
</comment>
<comment type="subcellular location">
    <subcellularLocation>
        <location evidence="1">Cell inner membrane</location>
        <topology evidence="1">Multi-pass membrane protein</topology>
    </subcellularLocation>
</comment>
<comment type="similarity">
    <text evidence="1">Belongs to the CobS family.</text>
</comment>
<feature type="chain" id="PRO_1000045815" description="Adenosylcobinamide-GDP ribazoletransferase">
    <location>
        <begin position="1"/>
        <end position="262"/>
    </location>
</feature>
<feature type="transmembrane region" description="Helical" evidence="1">
    <location>
        <begin position="43"/>
        <end position="63"/>
    </location>
</feature>
<feature type="transmembrane region" description="Helical" evidence="1">
    <location>
        <begin position="121"/>
        <end position="141"/>
    </location>
</feature>
<feature type="transmembrane region" description="Helical" evidence="1">
    <location>
        <begin position="145"/>
        <end position="165"/>
    </location>
</feature>
<feature type="transmembrane region" description="Helical" evidence="1">
    <location>
        <begin position="195"/>
        <end position="215"/>
    </location>
</feature>
<proteinExistence type="inferred from homology"/>